<sequence length="416" mass="43287">MNKQSWLLNLSLLKTHPAFRAVFLARFISIVSLGLLGVAVPVQIQMMTHSTWLVGLSVTLTGGAMFVGLMVGGVLADRYERKKVILLARGTCGIGFIGLCLNALLPEPSLLAIYLLGLWDGFFASLGVTALLAATPALVGRENLMQAGAITMLTVRLGSVISPMIGGLLLATGGVAWNYGLAAAGTFITLLPLLSLPALPPPPQPREHPLKSLLAGFRFLLASPLVGGIALLGGLLTMASAVRVLYPALADNWQMSAAEIGFLYAAIPLGAAIGALTSGKLAHSARPGLLMLLSTLGSFLAIGLFGLMPMWILGVVCLALFGWLSAVSSLLQYTMLQTQTPEAMLGRINGLWTAQNVTGDAIGAALLGGLGAMMTPVASASASGFGLLIIGVLLLLVLVELRRFRQTPPQVTASDS</sequence>
<proteinExistence type="inferred from homology"/>
<feature type="chain" id="PRO_0000227655" description="Enterobactin exporter EntS">
    <location>
        <begin position="1"/>
        <end position="416"/>
    </location>
</feature>
<feature type="topological domain" description="Cytoplasmic" evidence="1">
    <location>
        <begin position="1"/>
        <end position="21"/>
    </location>
</feature>
<feature type="transmembrane region" description="Helical" evidence="1">
    <location>
        <begin position="22"/>
        <end position="42"/>
    </location>
</feature>
<feature type="topological domain" description="Periplasmic" evidence="1">
    <location>
        <begin position="43"/>
        <end position="55"/>
    </location>
</feature>
<feature type="transmembrane region" description="Helical" evidence="1">
    <location>
        <begin position="56"/>
        <end position="76"/>
    </location>
</feature>
<feature type="topological domain" description="Cytoplasmic" evidence="1">
    <location>
        <begin position="77"/>
        <end position="83"/>
    </location>
</feature>
<feature type="transmembrane region" description="Helical" evidence="1">
    <location>
        <begin position="84"/>
        <end position="104"/>
    </location>
</feature>
<feature type="topological domain" description="Periplasmic" evidence="1">
    <location>
        <begin position="105"/>
        <end position="109"/>
    </location>
</feature>
<feature type="transmembrane region" description="Helical" evidence="1">
    <location>
        <begin position="110"/>
        <end position="130"/>
    </location>
</feature>
<feature type="topological domain" description="Cytoplasmic" evidence="1">
    <location>
        <begin position="131"/>
        <end position="156"/>
    </location>
</feature>
<feature type="transmembrane region" description="Helical" evidence="1">
    <location>
        <begin position="157"/>
        <end position="177"/>
    </location>
</feature>
<feature type="topological domain" description="Periplasmic" evidence="1">
    <location>
        <position position="178"/>
    </location>
</feature>
<feature type="transmembrane region" description="Helical" evidence="1">
    <location>
        <begin position="179"/>
        <end position="199"/>
    </location>
</feature>
<feature type="topological domain" description="Cytoplasmic" evidence="1">
    <location>
        <begin position="200"/>
        <end position="218"/>
    </location>
</feature>
<feature type="transmembrane region" description="Helical" evidence="1">
    <location>
        <begin position="219"/>
        <end position="239"/>
    </location>
</feature>
<feature type="topological domain" description="Periplasmic" evidence="1">
    <location>
        <begin position="240"/>
        <end position="256"/>
    </location>
</feature>
<feature type="transmembrane region" description="Helical" evidence="1">
    <location>
        <begin position="257"/>
        <end position="277"/>
    </location>
</feature>
<feature type="topological domain" description="Cytoplasmic" evidence="1">
    <location>
        <begin position="278"/>
        <end position="287"/>
    </location>
</feature>
<feature type="transmembrane region" description="Helical" evidence="1">
    <location>
        <begin position="288"/>
        <end position="307"/>
    </location>
</feature>
<feature type="topological domain" description="Periplasmic" evidence="1">
    <location>
        <begin position="308"/>
        <end position="313"/>
    </location>
</feature>
<feature type="transmembrane region" description="Helical" evidence="1">
    <location>
        <begin position="314"/>
        <end position="336"/>
    </location>
</feature>
<feature type="topological domain" description="Cytoplasmic" evidence="1">
    <location>
        <begin position="337"/>
        <end position="356"/>
    </location>
</feature>
<feature type="transmembrane region" description="Helical" evidence="1">
    <location>
        <begin position="357"/>
        <end position="377"/>
    </location>
</feature>
<feature type="topological domain" description="Periplasmic" evidence="1">
    <location>
        <position position="378"/>
    </location>
</feature>
<feature type="transmembrane region" description="Helical" evidence="1">
    <location>
        <begin position="379"/>
        <end position="399"/>
    </location>
</feature>
<feature type="topological domain" description="Cytoplasmic" evidence="1">
    <location>
        <begin position="400"/>
        <end position="416"/>
    </location>
</feature>
<organism>
    <name type="scientific">Shigella boydii serotype 4 (strain Sb227)</name>
    <dbReference type="NCBI Taxonomy" id="300268"/>
    <lineage>
        <taxon>Bacteria</taxon>
        <taxon>Pseudomonadati</taxon>
        <taxon>Pseudomonadota</taxon>
        <taxon>Gammaproteobacteria</taxon>
        <taxon>Enterobacterales</taxon>
        <taxon>Enterobacteriaceae</taxon>
        <taxon>Shigella</taxon>
    </lineage>
</organism>
<reference key="1">
    <citation type="journal article" date="2005" name="Nucleic Acids Res.">
        <title>Genome dynamics and diversity of Shigella species, the etiologic agents of bacillary dysentery.</title>
        <authorList>
            <person name="Yang F."/>
            <person name="Yang J."/>
            <person name="Zhang X."/>
            <person name="Chen L."/>
            <person name="Jiang Y."/>
            <person name="Yan Y."/>
            <person name="Tang X."/>
            <person name="Wang J."/>
            <person name="Xiong Z."/>
            <person name="Dong J."/>
            <person name="Xue Y."/>
            <person name="Zhu Y."/>
            <person name="Xu X."/>
            <person name="Sun L."/>
            <person name="Chen S."/>
            <person name="Nie H."/>
            <person name="Peng J."/>
            <person name="Xu J."/>
            <person name="Wang Y."/>
            <person name="Yuan Z."/>
            <person name="Wen Y."/>
            <person name="Yao Z."/>
            <person name="Shen Y."/>
            <person name="Qiang B."/>
            <person name="Hou Y."/>
            <person name="Yu J."/>
            <person name="Jin Q."/>
        </authorList>
    </citation>
    <scope>NUCLEOTIDE SEQUENCE [LARGE SCALE GENOMIC DNA]</scope>
    <source>
        <strain>Sb227</strain>
    </source>
</reference>
<gene>
    <name evidence="1" type="primary">entS</name>
    <name type="ordered locus">SBO_0452</name>
</gene>
<name>ENTS_SHIBS</name>
<comment type="function">
    <text evidence="1">Component of an export pathway for enterobactin.</text>
</comment>
<comment type="subcellular location">
    <subcellularLocation>
        <location evidence="1">Cell inner membrane</location>
        <topology evidence="1">Multi-pass membrane protein</topology>
    </subcellularLocation>
</comment>
<comment type="similarity">
    <text evidence="1">Belongs to the major facilitator superfamily. EntS (TC 2.A.1.38) family.</text>
</comment>
<evidence type="ECO:0000255" key="1">
    <source>
        <dbReference type="HAMAP-Rule" id="MF_01436"/>
    </source>
</evidence>
<keyword id="KW-0997">Cell inner membrane</keyword>
<keyword id="KW-1003">Cell membrane</keyword>
<keyword id="KW-0472">Membrane</keyword>
<keyword id="KW-0812">Transmembrane</keyword>
<keyword id="KW-1133">Transmembrane helix</keyword>
<keyword id="KW-0813">Transport</keyword>
<dbReference type="EMBL" id="CP000036">
    <property type="protein sequence ID" value="ABB65156.1"/>
    <property type="molecule type" value="Genomic_DNA"/>
</dbReference>
<dbReference type="RefSeq" id="WP_001041762.1">
    <property type="nucleotide sequence ID" value="NC_007613.1"/>
</dbReference>
<dbReference type="SMR" id="Q324V2"/>
<dbReference type="KEGG" id="sbo:SBO_0452"/>
<dbReference type="HOGENOM" id="CLU_034180_11_0_6"/>
<dbReference type="Proteomes" id="UP000007067">
    <property type="component" value="Chromosome"/>
</dbReference>
<dbReference type="GO" id="GO:0005886">
    <property type="term" value="C:plasma membrane"/>
    <property type="evidence" value="ECO:0007669"/>
    <property type="project" value="UniProtKB-SubCell"/>
</dbReference>
<dbReference type="GO" id="GO:0042931">
    <property type="term" value="F:enterobactin transmembrane transporter activity"/>
    <property type="evidence" value="ECO:0007669"/>
    <property type="project" value="InterPro"/>
</dbReference>
<dbReference type="CDD" id="cd06173">
    <property type="entry name" value="MFS_MefA_like"/>
    <property type="match status" value="1"/>
</dbReference>
<dbReference type="FunFam" id="1.20.1250.20:FF:000056">
    <property type="entry name" value="Enterobactin exporter EntS"/>
    <property type="match status" value="1"/>
</dbReference>
<dbReference type="Gene3D" id="1.20.1250.20">
    <property type="entry name" value="MFS general substrate transporter like domains"/>
    <property type="match status" value="1"/>
</dbReference>
<dbReference type="HAMAP" id="MF_01436">
    <property type="entry name" value="MFS_EntS"/>
    <property type="match status" value="1"/>
</dbReference>
<dbReference type="InterPro" id="IPR023722">
    <property type="entry name" value="Enterobactin_exp_EntS"/>
</dbReference>
<dbReference type="InterPro" id="IPR020846">
    <property type="entry name" value="MFS_dom"/>
</dbReference>
<dbReference type="InterPro" id="IPR036259">
    <property type="entry name" value="MFS_trans_sf"/>
</dbReference>
<dbReference type="InterPro" id="IPR010290">
    <property type="entry name" value="TM_effector"/>
</dbReference>
<dbReference type="NCBIfam" id="NF007792">
    <property type="entry name" value="PRK10489.1"/>
    <property type="match status" value="1"/>
</dbReference>
<dbReference type="PANTHER" id="PTHR23513:SF9">
    <property type="entry name" value="ENTEROBACTIN EXPORTER ENTS"/>
    <property type="match status" value="1"/>
</dbReference>
<dbReference type="PANTHER" id="PTHR23513">
    <property type="entry name" value="INTEGRAL MEMBRANE EFFLUX PROTEIN-RELATED"/>
    <property type="match status" value="1"/>
</dbReference>
<dbReference type="Pfam" id="PF05977">
    <property type="entry name" value="MFS_3"/>
    <property type="match status" value="1"/>
</dbReference>
<dbReference type="SUPFAM" id="SSF103473">
    <property type="entry name" value="MFS general substrate transporter"/>
    <property type="match status" value="1"/>
</dbReference>
<dbReference type="PROSITE" id="PS50850">
    <property type="entry name" value="MFS"/>
    <property type="match status" value="1"/>
</dbReference>
<protein>
    <recommendedName>
        <fullName evidence="1">Enterobactin exporter EntS</fullName>
    </recommendedName>
</protein>
<accession>Q324V2</accession>